<name>SELD_ECO57</name>
<reference key="1">
    <citation type="journal article" date="2001" name="Nature">
        <title>Genome sequence of enterohaemorrhagic Escherichia coli O157:H7.</title>
        <authorList>
            <person name="Perna N.T."/>
            <person name="Plunkett G. III"/>
            <person name="Burland V."/>
            <person name="Mau B."/>
            <person name="Glasner J.D."/>
            <person name="Rose D.J."/>
            <person name="Mayhew G.F."/>
            <person name="Evans P.S."/>
            <person name="Gregor J."/>
            <person name="Kirkpatrick H.A."/>
            <person name="Posfai G."/>
            <person name="Hackett J."/>
            <person name="Klink S."/>
            <person name="Boutin A."/>
            <person name="Shao Y."/>
            <person name="Miller L."/>
            <person name="Grotbeck E.J."/>
            <person name="Davis N.W."/>
            <person name="Lim A."/>
            <person name="Dimalanta E.T."/>
            <person name="Potamousis K."/>
            <person name="Apodaca J."/>
            <person name="Anantharaman T.S."/>
            <person name="Lin J."/>
            <person name="Yen G."/>
            <person name="Schwartz D.C."/>
            <person name="Welch R.A."/>
            <person name="Blattner F.R."/>
        </authorList>
    </citation>
    <scope>NUCLEOTIDE SEQUENCE [LARGE SCALE GENOMIC DNA]</scope>
    <source>
        <strain>O157:H7 / EDL933 / ATCC 700927 / EHEC</strain>
    </source>
</reference>
<reference key="2">
    <citation type="journal article" date="2001" name="DNA Res.">
        <title>Complete genome sequence of enterohemorrhagic Escherichia coli O157:H7 and genomic comparison with a laboratory strain K-12.</title>
        <authorList>
            <person name="Hayashi T."/>
            <person name="Makino K."/>
            <person name="Ohnishi M."/>
            <person name="Kurokawa K."/>
            <person name="Ishii K."/>
            <person name="Yokoyama K."/>
            <person name="Han C.-G."/>
            <person name="Ohtsubo E."/>
            <person name="Nakayama K."/>
            <person name="Murata T."/>
            <person name="Tanaka M."/>
            <person name="Tobe T."/>
            <person name="Iida T."/>
            <person name="Takami H."/>
            <person name="Honda T."/>
            <person name="Sasakawa C."/>
            <person name="Ogasawara N."/>
            <person name="Yasunaga T."/>
            <person name="Kuhara S."/>
            <person name="Shiba T."/>
            <person name="Hattori M."/>
            <person name="Shinagawa H."/>
        </authorList>
    </citation>
    <scope>NUCLEOTIDE SEQUENCE [LARGE SCALE GENOMIC DNA]</scope>
    <source>
        <strain>O157:H7 / Sakai / RIMD 0509952 / EHEC</strain>
    </source>
</reference>
<proteinExistence type="inferred from homology"/>
<comment type="function">
    <text evidence="1">Synthesizes selenophosphate from selenide and ATP.</text>
</comment>
<comment type="catalytic activity">
    <reaction evidence="1">
        <text>hydrogenselenide + ATP + H2O = selenophosphate + AMP + phosphate + 2 H(+)</text>
        <dbReference type="Rhea" id="RHEA:18737"/>
        <dbReference type="ChEBI" id="CHEBI:15377"/>
        <dbReference type="ChEBI" id="CHEBI:15378"/>
        <dbReference type="ChEBI" id="CHEBI:16144"/>
        <dbReference type="ChEBI" id="CHEBI:29317"/>
        <dbReference type="ChEBI" id="CHEBI:30616"/>
        <dbReference type="ChEBI" id="CHEBI:43474"/>
        <dbReference type="ChEBI" id="CHEBI:456215"/>
        <dbReference type="EC" id="2.7.9.3"/>
    </reaction>
</comment>
<comment type="cofactor">
    <cofactor evidence="1">
        <name>Mg(2+)</name>
        <dbReference type="ChEBI" id="CHEBI:18420"/>
    </cofactor>
    <text evidence="1">Binds 1 Mg(2+) ion per monomer.</text>
</comment>
<comment type="subunit">
    <text evidence="1">Homodimer.</text>
</comment>
<comment type="similarity">
    <text evidence="1">Belongs to the selenophosphate synthase 1 family. Class I subfamily.</text>
</comment>
<feature type="chain" id="PRO_0000127622" description="Selenide, water dikinase">
    <location>
        <begin position="1"/>
        <end position="347"/>
    </location>
</feature>
<feature type="active site" evidence="1">
    <location>
        <position position="17"/>
    </location>
</feature>
<feature type="binding site" description="in other chain" evidence="1">
    <location>
        <position position="20"/>
    </location>
    <ligand>
        <name>ATP</name>
        <dbReference type="ChEBI" id="CHEBI:30616"/>
        <note>ligand shared between dimeric partners</note>
    </ligand>
</feature>
<feature type="binding site" description="in other chain" evidence="1">
    <location>
        <begin position="48"/>
        <end position="50"/>
    </location>
    <ligand>
        <name>ATP</name>
        <dbReference type="ChEBI" id="CHEBI:30616"/>
        <note>ligand shared between dimeric partners</note>
    </ligand>
</feature>
<feature type="binding site" evidence="1">
    <location>
        <position position="51"/>
    </location>
    <ligand>
        <name>Mg(2+)</name>
        <dbReference type="ChEBI" id="CHEBI:18420"/>
    </ligand>
</feature>
<feature type="binding site" description="in other chain" evidence="1">
    <location>
        <position position="68"/>
    </location>
    <ligand>
        <name>ATP</name>
        <dbReference type="ChEBI" id="CHEBI:30616"/>
        <note>ligand shared between dimeric partners</note>
    </ligand>
</feature>
<feature type="binding site" description="in other chain" evidence="1">
    <location>
        <position position="91"/>
    </location>
    <ligand>
        <name>ATP</name>
        <dbReference type="ChEBI" id="CHEBI:30616"/>
        <note>ligand shared between dimeric partners</note>
    </ligand>
</feature>
<feature type="binding site" evidence="1">
    <location>
        <position position="91"/>
    </location>
    <ligand>
        <name>Mg(2+)</name>
        <dbReference type="ChEBI" id="CHEBI:18420"/>
    </ligand>
</feature>
<feature type="binding site" evidence="1">
    <location>
        <begin position="139"/>
        <end position="141"/>
    </location>
    <ligand>
        <name>ATP</name>
        <dbReference type="ChEBI" id="CHEBI:30616"/>
        <note>ligand shared between dimeric partners</note>
    </ligand>
</feature>
<feature type="binding site" evidence="1">
    <location>
        <position position="227"/>
    </location>
    <ligand>
        <name>Mg(2+)</name>
        <dbReference type="ChEBI" id="CHEBI:18420"/>
    </ligand>
</feature>
<feature type="site" description="Important for catalytic activity" evidence="1">
    <location>
        <position position="20"/>
    </location>
</feature>
<organism>
    <name type="scientific">Escherichia coli O157:H7</name>
    <dbReference type="NCBI Taxonomy" id="83334"/>
    <lineage>
        <taxon>Bacteria</taxon>
        <taxon>Pseudomonadati</taxon>
        <taxon>Pseudomonadota</taxon>
        <taxon>Gammaproteobacteria</taxon>
        <taxon>Enterobacterales</taxon>
        <taxon>Enterobacteriaceae</taxon>
        <taxon>Escherichia</taxon>
    </lineage>
</organism>
<gene>
    <name evidence="1" type="primary">selD</name>
    <name type="ordered locus">Z2797</name>
    <name type="ordered locus">ECs2470</name>
</gene>
<evidence type="ECO:0000255" key="1">
    <source>
        <dbReference type="HAMAP-Rule" id="MF_00625"/>
    </source>
</evidence>
<accession>P66794</accession>
<accession>Q8FGY3</accession>
<accession>Q8XDW6</accession>
<protein>
    <recommendedName>
        <fullName evidence="1">Selenide, water dikinase</fullName>
        <ecNumber evidence="1">2.7.9.3</ecNumber>
    </recommendedName>
    <alternativeName>
        <fullName evidence="1">Selenium donor protein</fullName>
    </alternativeName>
    <alternativeName>
        <fullName evidence="1">Selenophosphate synthase</fullName>
    </alternativeName>
</protein>
<sequence length="347" mass="36673">MSENSIRLTQYSHGAGCGCKISPKVLETILHSEQAKFVDPNLLVGNETRDDAAVYDLGNGTSVISTTDFFMPIVDNPFDFGRIAATNAISDIFAMGGKPIMAIAILGWPINKLSPEIAREVTEGGRYACRQAGIALAGGHSIDAPEPIFGLAVTGIVPTERVKKNSTAQAGCKLFLTKPLGIGVLTTAEKKSLLKPEHQGLATEVMCRMNIAGASFANIEGVKAMTDVTGFGLLGHLSEMCQGAGVQARVDYDAIPKLPGVEEYIKLGAVPGGTERNFASYGHLMGEMPREVRDLLCDPQTSGGLLLAVMPEAENEVKATAAEFGIELTAIGELVPARGGRAMVEIR</sequence>
<keyword id="KW-0067">ATP-binding</keyword>
<keyword id="KW-0418">Kinase</keyword>
<keyword id="KW-0460">Magnesium</keyword>
<keyword id="KW-0479">Metal-binding</keyword>
<keyword id="KW-0547">Nucleotide-binding</keyword>
<keyword id="KW-1185">Reference proteome</keyword>
<keyword id="KW-0711">Selenium</keyword>
<keyword id="KW-0808">Transferase</keyword>
<dbReference type="EC" id="2.7.9.3" evidence="1"/>
<dbReference type="EMBL" id="AE005174">
    <property type="protein sequence ID" value="AAG56750.1"/>
    <property type="molecule type" value="Genomic_DNA"/>
</dbReference>
<dbReference type="EMBL" id="BA000007">
    <property type="protein sequence ID" value="BAB35893.1"/>
    <property type="molecule type" value="Genomic_DNA"/>
</dbReference>
<dbReference type="PIR" id="B85786">
    <property type="entry name" value="B85786"/>
</dbReference>
<dbReference type="PIR" id="F90937">
    <property type="entry name" value="F90937"/>
</dbReference>
<dbReference type="RefSeq" id="NP_310497.1">
    <property type="nucleotide sequence ID" value="NC_002695.1"/>
</dbReference>
<dbReference type="RefSeq" id="WP_001298241.1">
    <property type="nucleotide sequence ID" value="NZ_VOAI01000007.1"/>
</dbReference>
<dbReference type="SMR" id="P66794"/>
<dbReference type="STRING" id="155864.Z2797"/>
<dbReference type="GeneID" id="914210"/>
<dbReference type="GeneID" id="93775981"/>
<dbReference type="KEGG" id="ece:Z2797"/>
<dbReference type="KEGG" id="ecs:ECs_2470"/>
<dbReference type="PATRIC" id="fig|386585.9.peg.2585"/>
<dbReference type="eggNOG" id="COG0709">
    <property type="taxonomic scope" value="Bacteria"/>
</dbReference>
<dbReference type="HOGENOM" id="CLU_032859_0_1_6"/>
<dbReference type="OMA" id="LARDWMC"/>
<dbReference type="Proteomes" id="UP000000558">
    <property type="component" value="Chromosome"/>
</dbReference>
<dbReference type="Proteomes" id="UP000002519">
    <property type="component" value="Chromosome"/>
</dbReference>
<dbReference type="GO" id="GO:0005737">
    <property type="term" value="C:cytoplasm"/>
    <property type="evidence" value="ECO:0007669"/>
    <property type="project" value="TreeGrafter"/>
</dbReference>
<dbReference type="GO" id="GO:0005524">
    <property type="term" value="F:ATP binding"/>
    <property type="evidence" value="ECO:0007669"/>
    <property type="project" value="UniProtKB-UniRule"/>
</dbReference>
<dbReference type="GO" id="GO:0000287">
    <property type="term" value="F:magnesium ion binding"/>
    <property type="evidence" value="ECO:0007669"/>
    <property type="project" value="UniProtKB-UniRule"/>
</dbReference>
<dbReference type="GO" id="GO:0004756">
    <property type="term" value="F:selenide, water dikinase activity"/>
    <property type="evidence" value="ECO:0007669"/>
    <property type="project" value="UniProtKB-UniRule"/>
</dbReference>
<dbReference type="GO" id="GO:0016260">
    <property type="term" value="P:selenocysteine biosynthetic process"/>
    <property type="evidence" value="ECO:0007669"/>
    <property type="project" value="InterPro"/>
</dbReference>
<dbReference type="CDD" id="cd02195">
    <property type="entry name" value="SelD"/>
    <property type="match status" value="1"/>
</dbReference>
<dbReference type="FunFam" id="3.30.1330.10:FF:000003">
    <property type="entry name" value="Selenide, water dikinase"/>
    <property type="match status" value="1"/>
</dbReference>
<dbReference type="FunFam" id="3.90.650.10:FF:000004">
    <property type="entry name" value="Selenide, water dikinase"/>
    <property type="match status" value="1"/>
</dbReference>
<dbReference type="Gene3D" id="3.90.650.10">
    <property type="entry name" value="PurM-like C-terminal domain"/>
    <property type="match status" value="1"/>
</dbReference>
<dbReference type="Gene3D" id="3.30.1330.10">
    <property type="entry name" value="PurM-like, N-terminal domain"/>
    <property type="match status" value="1"/>
</dbReference>
<dbReference type="HAMAP" id="MF_00625">
    <property type="entry name" value="SelD"/>
    <property type="match status" value="1"/>
</dbReference>
<dbReference type="InterPro" id="IPR010918">
    <property type="entry name" value="PurM-like_C_dom"/>
</dbReference>
<dbReference type="InterPro" id="IPR036676">
    <property type="entry name" value="PurM-like_C_sf"/>
</dbReference>
<dbReference type="InterPro" id="IPR016188">
    <property type="entry name" value="PurM-like_N"/>
</dbReference>
<dbReference type="InterPro" id="IPR036921">
    <property type="entry name" value="PurM-like_N_sf"/>
</dbReference>
<dbReference type="InterPro" id="IPR023061">
    <property type="entry name" value="SelD_I"/>
</dbReference>
<dbReference type="InterPro" id="IPR004536">
    <property type="entry name" value="SPS/SelD"/>
</dbReference>
<dbReference type="NCBIfam" id="NF002098">
    <property type="entry name" value="PRK00943.1"/>
    <property type="match status" value="1"/>
</dbReference>
<dbReference type="NCBIfam" id="TIGR00476">
    <property type="entry name" value="selD"/>
    <property type="match status" value="1"/>
</dbReference>
<dbReference type="PANTHER" id="PTHR10256:SF0">
    <property type="entry name" value="INACTIVE SELENIDE, WATER DIKINASE-LIKE PROTEIN-RELATED"/>
    <property type="match status" value="1"/>
</dbReference>
<dbReference type="PANTHER" id="PTHR10256">
    <property type="entry name" value="SELENIDE, WATER DIKINASE"/>
    <property type="match status" value="1"/>
</dbReference>
<dbReference type="Pfam" id="PF00586">
    <property type="entry name" value="AIRS"/>
    <property type="match status" value="1"/>
</dbReference>
<dbReference type="Pfam" id="PF02769">
    <property type="entry name" value="AIRS_C"/>
    <property type="match status" value="1"/>
</dbReference>
<dbReference type="PIRSF" id="PIRSF036407">
    <property type="entry name" value="Selenphspht_syn"/>
    <property type="match status" value="1"/>
</dbReference>
<dbReference type="SUPFAM" id="SSF56042">
    <property type="entry name" value="PurM C-terminal domain-like"/>
    <property type="match status" value="1"/>
</dbReference>
<dbReference type="SUPFAM" id="SSF55326">
    <property type="entry name" value="PurM N-terminal domain-like"/>
    <property type="match status" value="1"/>
</dbReference>